<protein>
    <recommendedName>
        <fullName evidence="1">ATP synthase epsilon chain</fullName>
    </recommendedName>
    <alternativeName>
        <fullName evidence="1">ATP synthase F1 sector epsilon subunit</fullName>
    </alternativeName>
    <alternativeName>
        <fullName evidence="1">F-ATPase epsilon subunit</fullName>
    </alternativeName>
</protein>
<name>ATPE_GEOMG</name>
<gene>
    <name evidence="1" type="primary">atpC</name>
    <name type="ordered locus">Gmet_3405</name>
</gene>
<sequence length="138" mass="15198">MAEKLKVDLVTPYKKILSEEVDEITATGALGEFSVLPGHAPFLTSLKIGELTYKKGGQFFHLAVNWGYFEVEDDKVTVLVETAERADEIDLERAKAALGRAEAALKGLSPEDKSYKTQEAALERALIRMQVAGKSTRK</sequence>
<organism>
    <name type="scientific">Geobacter metallireducens (strain ATCC 53774 / DSM 7210 / GS-15)</name>
    <dbReference type="NCBI Taxonomy" id="269799"/>
    <lineage>
        <taxon>Bacteria</taxon>
        <taxon>Pseudomonadati</taxon>
        <taxon>Thermodesulfobacteriota</taxon>
        <taxon>Desulfuromonadia</taxon>
        <taxon>Geobacterales</taxon>
        <taxon>Geobacteraceae</taxon>
        <taxon>Geobacter</taxon>
    </lineage>
</organism>
<comment type="function">
    <text evidence="1">Produces ATP from ADP in the presence of a proton gradient across the membrane.</text>
</comment>
<comment type="subunit">
    <text>F-type ATPases have 2 components, CF(1) - the catalytic core - and CF(0) - the membrane proton channel. CF(1) has five subunits: alpha(3), beta(3), gamma(1), delta(1), epsilon(1). CF(0) has three main subunits: a, b and c.</text>
</comment>
<comment type="subcellular location">
    <subcellularLocation>
        <location evidence="1">Cell inner membrane</location>
        <topology evidence="1">Peripheral membrane protein</topology>
    </subcellularLocation>
</comment>
<comment type="similarity">
    <text evidence="1">Belongs to the ATPase epsilon chain family.</text>
</comment>
<proteinExistence type="inferred from homology"/>
<keyword id="KW-0066">ATP synthesis</keyword>
<keyword id="KW-0997">Cell inner membrane</keyword>
<keyword id="KW-1003">Cell membrane</keyword>
<keyword id="KW-0139">CF(1)</keyword>
<keyword id="KW-0375">Hydrogen ion transport</keyword>
<keyword id="KW-0406">Ion transport</keyword>
<keyword id="KW-0472">Membrane</keyword>
<keyword id="KW-1185">Reference proteome</keyword>
<keyword id="KW-0813">Transport</keyword>
<dbReference type="EMBL" id="CP000148">
    <property type="protein sequence ID" value="ABB33617.1"/>
    <property type="molecule type" value="Genomic_DNA"/>
</dbReference>
<dbReference type="RefSeq" id="WP_004514212.1">
    <property type="nucleotide sequence ID" value="NC_007517.1"/>
</dbReference>
<dbReference type="SMR" id="Q39Q57"/>
<dbReference type="STRING" id="269799.Gmet_3405"/>
<dbReference type="KEGG" id="gme:Gmet_3405"/>
<dbReference type="eggNOG" id="COG0355">
    <property type="taxonomic scope" value="Bacteria"/>
</dbReference>
<dbReference type="HOGENOM" id="CLU_084338_1_3_7"/>
<dbReference type="Proteomes" id="UP000007073">
    <property type="component" value="Chromosome"/>
</dbReference>
<dbReference type="GO" id="GO:0005886">
    <property type="term" value="C:plasma membrane"/>
    <property type="evidence" value="ECO:0007669"/>
    <property type="project" value="UniProtKB-SubCell"/>
</dbReference>
<dbReference type="GO" id="GO:0045259">
    <property type="term" value="C:proton-transporting ATP synthase complex"/>
    <property type="evidence" value="ECO:0007669"/>
    <property type="project" value="UniProtKB-KW"/>
</dbReference>
<dbReference type="GO" id="GO:0005524">
    <property type="term" value="F:ATP binding"/>
    <property type="evidence" value="ECO:0007669"/>
    <property type="project" value="UniProtKB-UniRule"/>
</dbReference>
<dbReference type="GO" id="GO:0046933">
    <property type="term" value="F:proton-transporting ATP synthase activity, rotational mechanism"/>
    <property type="evidence" value="ECO:0007669"/>
    <property type="project" value="UniProtKB-UniRule"/>
</dbReference>
<dbReference type="CDD" id="cd12152">
    <property type="entry name" value="F1-ATPase_delta"/>
    <property type="match status" value="1"/>
</dbReference>
<dbReference type="FunFam" id="2.60.15.10:FF:000001">
    <property type="entry name" value="ATP synthase epsilon chain"/>
    <property type="match status" value="1"/>
</dbReference>
<dbReference type="Gene3D" id="1.20.5.440">
    <property type="entry name" value="ATP synthase delta/epsilon subunit, C-terminal domain"/>
    <property type="match status" value="1"/>
</dbReference>
<dbReference type="Gene3D" id="2.60.15.10">
    <property type="entry name" value="F0F1 ATP synthase delta/epsilon subunit, N-terminal"/>
    <property type="match status" value="1"/>
</dbReference>
<dbReference type="HAMAP" id="MF_00530">
    <property type="entry name" value="ATP_synth_epsil_bac"/>
    <property type="match status" value="1"/>
</dbReference>
<dbReference type="InterPro" id="IPR001469">
    <property type="entry name" value="ATP_synth_F1_dsu/esu"/>
</dbReference>
<dbReference type="InterPro" id="IPR020546">
    <property type="entry name" value="ATP_synth_F1_dsu/esu_N"/>
</dbReference>
<dbReference type="InterPro" id="IPR020547">
    <property type="entry name" value="ATP_synth_F1_esu_C"/>
</dbReference>
<dbReference type="InterPro" id="IPR036771">
    <property type="entry name" value="ATPsynth_dsu/esu_N"/>
</dbReference>
<dbReference type="NCBIfam" id="TIGR01216">
    <property type="entry name" value="ATP_synt_epsi"/>
    <property type="match status" value="1"/>
</dbReference>
<dbReference type="NCBIfam" id="NF009980">
    <property type="entry name" value="PRK13446.1"/>
    <property type="match status" value="1"/>
</dbReference>
<dbReference type="PANTHER" id="PTHR13822">
    <property type="entry name" value="ATP SYNTHASE DELTA/EPSILON CHAIN"/>
    <property type="match status" value="1"/>
</dbReference>
<dbReference type="PANTHER" id="PTHR13822:SF10">
    <property type="entry name" value="ATP SYNTHASE EPSILON CHAIN, CHLOROPLASTIC"/>
    <property type="match status" value="1"/>
</dbReference>
<dbReference type="Pfam" id="PF00401">
    <property type="entry name" value="ATP-synt_DE"/>
    <property type="match status" value="1"/>
</dbReference>
<dbReference type="Pfam" id="PF02823">
    <property type="entry name" value="ATP-synt_DE_N"/>
    <property type="match status" value="1"/>
</dbReference>
<dbReference type="SUPFAM" id="SSF51344">
    <property type="entry name" value="Epsilon subunit of F1F0-ATP synthase N-terminal domain"/>
    <property type="match status" value="1"/>
</dbReference>
<evidence type="ECO:0000255" key="1">
    <source>
        <dbReference type="HAMAP-Rule" id="MF_00530"/>
    </source>
</evidence>
<accession>Q39Q57</accession>
<reference key="1">
    <citation type="journal article" date="2009" name="BMC Microbiol.">
        <title>The genome sequence of Geobacter metallireducens: features of metabolism, physiology and regulation common and dissimilar to Geobacter sulfurreducens.</title>
        <authorList>
            <person name="Aklujkar M."/>
            <person name="Krushkal J."/>
            <person name="DiBartolo G."/>
            <person name="Lapidus A."/>
            <person name="Land M.L."/>
            <person name="Lovley D.R."/>
        </authorList>
    </citation>
    <scope>NUCLEOTIDE SEQUENCE [LARGE SCALE GENOMIC DNA]</scope>
    <source>
        <strain>ATCC 53774 / DSM 7210 / GS-15</strain>
    </source>
</reference>
<feature type="chain" id="PRO_0000265818" description="ATP synthase epsilon chain">
    <location>
        <begin position="1"/>
        <end position="138"/>
    </location>
</feature>